<accession>A0K847</accession>
<gene>
    <name evidence="1" type="primary">clpP</name>
    <name type="ordered locus">Bcen2424_1923</name>
</gene>
<keyword id="KW-0963">Cytoplasm</keyword>
<keyword id="KW-0378">Hydrolase</keyword>
<keyword id="KW-0645">Protease</keyword>
<keyword id="KW-0720">Serine protease</keyword>
<protein>
    <recommendedName>
        <fullName evidence="1">ATP-dependent Clp protease proteolytic subunit</fullName>
        <ecNumber evidence="1">3.4.21.92</ecNumber>
    </recommendedName>
    <alternativeName>
        <fullName evidence="1">Endopeptidase Clp</fullName>
    </alternativeName>
</protein>
<proteinExistence type="inferred from homology"/>
<feature type="chain" id="PRO_1000026068" description="ATP-dependent Clp protease proteolytic subunit">
    <location>
        <begin position="1"/>
        <end position="217"/>
    </location>
</feature>
<feature type="active site" description="Nucleophile" evidence="1">
    <location>
        <position position="121"/>
    </location>
</feature>
<feature type="active site" evidence="1">
    <location>
        <position position="146"/>
    </location>
</feature>
<reference key="1">
    <citation type="submission" date="2006-08" db="EMBL/GenBank/DDBJ databases">
        <title>Complete sequence of chromosome 1 of Burkholderia cenocepacia HI2424.</title>
        <authorList>
            <person name="Copeland A."/>
            <person name="Lucas S."/>
            <person name="Lapidus A."/>
            <person name="Barry K."/>
            <person name="Detter J.C."/>
            <person name="Glavina del Rio T."/>
            <person name="Hammon N."/>
            <person name="Israni S."/>
            <person name="Pitluck S."/>
            <person name="Chain P."/>
            <person name="Malfatti S."/>
            <person name="Shin M."/>
            <person name="Vergez L."/>
            <person name="Schmutz J."/>
            <person name="Larimer F."/>
            <person name="Land M."/>
            <person name="Hauser L."/>
            <person name="Kyrpides N."/>
            <person name="Kim E."/>
            <person name="LiPuma J.J."/>
            <person name="Gonzalez C.F."/>
            <person name="Konstantinidis K."/>
            <person name="Tiedje J.M."/>
            <person name="Richardson P."/>
        </authorList>
    </citation>
    <scope>NUCLEOTIDE SEQUENCE [LARGE SCALE GENOMIC DNA]</scope>
    <source>
        <strain>HI2424</strain>
    </source>
</reference>
<organism>
    <name type="scientific">Burkholderia cenocepacia (strain HI2424)</name>
    <dbReference type="NCBI Taxonomy" id="331272"/>
    <lineage>
        <taxon>Bacteria</taxon>
        <taxon>Pseudomonadati</taxon>
        <taxon>Pseudomonadota</taxon>
        <taxon>Betaproteobacteria</taxon>
        <taxon>Burkholderiales</taxon>
        <taxon>Burkholderiaceae</taxon>
        <taxon>Burkholderia</taxon>
        <taxon>Burkholderia cepacia complex</taxon>
    </lineage>
</organism>
<sequence>MITRAELLDMLASNAPQGFEAQALGLVPIVVETSGRGERSYDIYSRLLKERLVFMVGEVNDQTANLVVAQLLFLESENPDKDISLYINSPGGSVSAGMAIYDTMQFIKPDVSTLCMGLAASMGAFLLASGAKGKRFALPNSRVMIHQPLGGARGQASDIEIQAREILYLKERLNNLLAQHTGQDVERIARDTDRDNFMSSEDAKAYGLIDQVLLKRP</sequence>
<evidence type="ECO:0000255" key="1">
    <source>
        <dbReference type="HAMAP-Rule" id="MF_00444"/>
    </source>
</evidence>
<dbReference type="EC" id="3.4.21.92" evidence="1"/>
<dbReference type="EMBL" id="CP000458">
    <property type="protein sequence ID" value="ABK08674.1"/>
    <property type="molecule type" value="Genomic_DNA"/>
</dbReference>
<dbReference type="RefSeq" id="WP_006496351.1">
    <property type="nucleotide sequence ID" value="NC_008542.1"/>
</dbReference>
<dbReference type="SMR" id="A0K847"/>
<dbReference type="MEROPS" id="S14.001"/>
<dbReference type="GeneID" id="98105549"/>
<dbReference type="KEGG" id="bch:Bcen2424_1923"/>
<dbReference type="HOGENOM" id="CLU_058707_3_2_4"/>
<dbReference type="GO" id="GO:0005737">
    <property type="term" value="C:cytoplasm"/>
    <property type="evidence" value="ECO:0007669"/>
    <property type="project" value="UniProtKB-SubCell"/>
</dbReference>
<dbReference type="GO" id="GO:0009368">
    <property type="term" value="C:endopeptidase Clp complex"/>
    <property type="evidence" value="ECO:0007669"/>
    <property type="project" value="TreeGrafter"/>
</dbReference>
<dbReference type="GO" id="GO:0004176">
    <property type="term" value="F:ATP-dependent peptidase activity"/>
    <property type="evidence" value="ECO:0007669"/>
    <property type="project" value="InterPro"/>
</dbReference>
<dbReference type="GO" id="GO:0051117">
    <property type="term" value="F:ATPase binding"/>
    <property type="evidence" value="ECO:0007669"/>
    <property type="project" value="TreeGrafter"/>
</dbReference>
<dbReference type="GO" id="GO:0004252">
    <property type="term" value="F:serine-type endopeptidase activity"/>
    <property type="evidence" value="ECO:0007669"/>
    <property type="project" value="UniProtKB-UniRule"/>
</dbReference>
<dbReference type="GO" id="GO:0006515">
    <property type="term" value="P:protein quality control for misfolded or incompletely synthesized proteins"/>
    <property type="evidence" value="ECO:0007669"/>
    <property type="project" value="TreeGrafter"/>
</dbReference>
<dbReference type="CDD" id="cd07017">
    <property type="entry name" value="S14_ClpP_2"/>
    <property type="match status" value="1"/>
</dbReference>
<dbReference type="FunFam" id="3.90.226.10:FF:000001">
    <property type="entry name" value="ATP-dependent Clp protease proteolytic subunit"/>
    <property type="match status" value="1"/>
</dbReference>
<dbReference type="Gene3D" id="3.90.226.10">
    <property type="entry name" value="2-enoyl-CoA Hydratase, Chain A, domain 1"/>
    <property type="match status" value="1"/>
</dbReference>
<dbReference type="HAMAP" id="MF_00444">
    <property type="entry name" value="ClpP"/>
    <property type="match status" value="1"/>
</dbReference>
<dbReference type="InterPro" id="IPR001907">
    <property type="entry name" value="ClpP"/>
</dbReference>
<dbReference type="InterPro" id="IPR029045">
    <property type="entry name" value="ClpP/crotonase-like_dom_sf"/>
</dbReference>
<dbReference type="InterPro" id="IPR023562">
    <property type="entry name" value="ClpP/TepA"/>
</dbReference>
<dbReference type="InterPro" id="IPR033135">
    <property type="entry name" value="ClpP_His_AS"/>
</dbReference>
<dbReference type="InterPro" id="IPR018215">
    <property type="entry name" value="ClpP_Ser_AS"/>
</dbReference>
<dbReference type="NCBIfam" id="TIGR00493">
    <property type="entry name" value="clpP"/>
    <property type="match status" value="1"/>
</dbReference>
<dbReference type="NCBIfam" id="NF001368">
    <property type="entry name" value="PRK00277.1"/>
    <property type="match status" value="1"/>
</dbReference>
<dbReference type="NCBIfam" id="NF009205">
    <property type="entry name" value="PRK12553.1"/>
    <property type="match status" value="1"/>
</dbReference>
<dbReference type="PANTHER" id="PTHR10381">
    <property type="entry name" value="ATP-DEPENDENT CLP PROTEASE PROTEOLYTIC SUBUNIT"/>
    <property type="match status" value="1"/>
</dbReference>
<dbReference type="PANTHER" id="PTHR10381:SF70">
    <property type="entry name" value="ATP-DEPENDENT CLP PROTEASE PROTEOLYTIC SUBUNIT"/>
    <property type="match status" value="1"/>
</dbReference>
<dbReference type="Pfam" id="PF00574">
    <property type="entry name" value="CLP_protease"/>
    <property type="match status" value="1"/>
</dbReference>
<dbReference type="PRINTS" id="PR00127">
    <property type="entry name" value="CLPPROTEASEP"/>
</dbReference>
<dbReference type="SUPFAM" id="SSF52096">
    <property type="entry name" value="ClpP/crotonase"/>
    <property type="match status" value="1"/>
</dbReference>
<dbReference type="PROSITE" id="PS00382">
    <property type="entry name" value="CLP_PROTEASE_HIS"/>
    <property type="match status" value="1"/>
</dbReference>
<dbReference type="PROSITE" id="PS00381">
    <property type="entry name" value="CLP_PROTEASE_SER"/>
    <property type="match status" value="1"/>
</dbReference>
<comment type="function">
    <text evidence="1">Cleaves peptides in various proteins in a process that requires ATP hydrolysis. Has a chymotrypsin-like activity. Plays a major role in the degradation of misfolded proteins.</text>
</comment>
<comment type="catalytic activity">
    <reaction evidence="1">
        <text>Hydrolysis of proteins to small peptides in the presence of ATP and magnesium. alpha-casein is the usual test substrate. In the absence of ATP, only oligopeptides shorter than five residues are hydrolyzed (such as succinyl-Leu-Tyr-|-NHMec, and Leu-Tyr-Leu-|-Tyr-Trp, in which cleavage of the -Tyr-|-Leu- and -Tyr-|-Trp bonds also occurs).</text>
        <dbReference type="EC" id="3.4.21.92"/>
    </reaction>
</comment>
<comment type="subunit">
    <text evidence="1">Fourteen ClpP subunits assemble into 2 heptameric rings which stack back to back to give a disk-like structure with a central cavity, resembling the structure of eukaryotic proteasomes.</text>
</comment>
<comment type="subcellular location">
    <subcellularLocation>
        <location evidence="1">Cytoplasm</location>
    </subcellularLocation>
</comment>
<comment type="similarity">
    <text evidence="1">Belongs to the peptidase S14 family.</text>
</comment>
<name>CLPP_BURCH</name>